<accession>P38503</accession>
<feature type="initiator methionine" description="Removed" evidence="2">
    <location>
        <position position="1"/>
    </location>
</feature>
<feature type="chain" id="PRO_0000179151" description="Phosphate acetyltransferase">
    <location>
        <begin position="2"/>
        <end position="333"/>
    </location>
</feature>
<feature type="mutagenesis site" description="Loss of activity." evidence="3">
    <original>C</original>
    <variation>A</variation>
    <location>
        <position position="159"/>
    </location>
</feature>
<feature type="mutagenesis site" description="No loss of activity." evidence="3">
    <original>C</original>
    <variation>S</variation>
    <location>
        <position position="159"/>
    </location>
</feature>
<feature type="helix" evidence="7">
    <location>
        <begin position="3"/>
        <end position="15"/>
    </location>
</feature>
<feature type="strand" evidence="7">
    <location>
        <begin position="18"/>
        <end position="21"/>
    </location>
</feature>
<feature type="helix" evidence="7">
    <location>
        <begin position="27"/>
        <end position="39"/>
    </location>
</feature>
<feature type="strand" evidence="7">
    <location>
        <begin position="43"/>
        <end position="48"/>
    </location>
</feature>
<feature type="helix" evidence="7">
    <location>
        <begin position="50"/>
        <end position="57"/>
    </location>
</feature>
<feature type="strand" evidence="7">
    <location>
        <begin position="65"/>
        <end position="68"/>
    </location>
</feature>
<feature type="turn" evidence="6">
    <location>
        <begin position="70"/>
        <end position="72"/>
    </location>
</feature>
<feature type="helix" evidence="7">
    <location>
        <begin position="76"/>
        <end position="87"/>
    </location>
</feature>
<feature type="helix" evidence="7">
    <location>
        <begin position="88"/>
        <end position="90"/>
    </location>
</feature>
<feature type="helix" evidence="7">
    <location>
        <begin position="94"/>
        <end position="100"/>
    </location>
</feature>
<feature type="helix" evidence="7">
    <location>
        <begin position="104"/>
        <end position="113"/>
    </location>
</feature>
<feature type="strand" evidence="7">
    <location>
        <begin position="118"/>
        <end position="122"/>
    </location>
</feature>
<feature type="strand" evidence="6">
    <location>
        <begin position="124"/>
        <end position="126"/>
    </location>
</feature>
<feature type="helix" evidence="7">
    <location>
        <begin position="129"/>
        <end position="138"/>
    </location>
</feature>
<feature type="strand" evidence="6">
    <location>
        <begin position="141"/>
        <end position="144"/>
    </location>
</feature>
<feature type="strand" evidence="7">
    <location>
        <begin position="149"/>
        <end position="155"/>
    </location>
</feature>
<feature type="strand" evidence="7">
    <location>
        <begin position="166"/>
        <end position="170"/>
    </location>
</feature>
<feature type="strand" evidence="7">
    <location>
        <begin position="172"/>
        <end position="174"/>
    </location>
</feature>
<feature type="helix" evidence="7">
    <location>
        <begin position="180"/>
        <end position="198"/>
    </location>
</feature>
<feature type="strand" evidence="7">
    <location>
        <begin position="203"/>
        <end position="207"/>
    </location>
</feature>
<feature type="strand" evidence="6">
    <location>
        <begin position="211"/>
        <end position="215"/>
    </location>
</feature>
<feature type="helix" evidence="7">
    <location>
        <begin position="218"/>
        <end position="233"/>
    </location>
</feature>
<feature type="strand" evidence="7">
    <location>
        <begin position="237"/>
        <end position="243"/>
    </location>
</feature>
<feature type="helix" evidence="7">
    <location>
        <begin position="245"/>
        <end position="249"/>
    </location>
</feature>
<feature type="helix" evidence="7">
    <location>
        <begin position="251"/>
        <end position="257"/>
    </location>
</feature>
<feature type="turn" evidence="5">
    <location>
        <begin position="264"/>
        <end position="266"/>
    </location>
</feature>
<feature type="strand" evidence="7">
    <location>
        <begin position="269"/>
        <end position="271"/>
    </location>
</feature>
<feature type="helix" evidence="7">
    <location>
        <begin position="275"/>
        <end position="287"/>
    </location>
</feature>
<feature type="strand" evidence="7">
    <location>
        <begin position="292"/>
        <end position="303"/>
    </location>
</feature>
<feature type="strand" evidence="7">
    <location>
        <begin position="305"/>
        <end position="307"/>
    </location>
</feature>
<feature type="helix" evidence="7">
    <location>
        <begin position="314"/>
        <end position="332"/>
    </location>
</feature>
<protein>
    <recommendedName>
        <fullName>Phosphate acetyltransferase</fullName>
        <ecNumber>2.3.1.8</ecNumber>
    </recommendedName>
    <alternativeName>
        <fullName>Phosphotransacetylase</fullName>
    </alternativeName>
</protein>
<comment type="catalytic activity">
    <reaction>
        <text>acetyl-CoA + phosphate = acetyl phosphate + CoA</text>
        <dbReference type="Rhea" id="RHEA:19521"/>
        <dbReference type="ChEBI" id="CHEBI:22191"/>
        <dbReference type="ChEBI" id="CHEBI:43474"/>
        <dbReference type="ChEBI" id="CHEBI:57287"/>
        <dbReference type="ChEBI" id="CHEBI:57288"/>
        <dbReference type="EC" id="2.3.1.8"/>
    </reaction>
</comment>
<comment type="pathway">
    <text>Metabolic intermediate biosynthesis; acetyl-CoA biosynthesis; acetyl-CoA from acetate: step 2/2.</text>
</comment>
<comment type="subunit">
    <text evidence="1">Homodimer.</text>
</comment>
<comment type="subcellular location">
    <subcellularLocation>
        <location>Cell membrane</location>
        <topology>Peripheral membrane protein</topology>
    </subcellularLocation>
</comment>
<comment type="similarity">
    <text evidence="4">Belongs to the phosphate acetyltransferase and butyryltransferase family.</text>
</comment>
<organism>
    <name type="scientific">Methanosarcina thermophila</name>
    <dbReference type="NCBI Taxonomy" id="2210"/>
    <lineage>
        <taxon>Archaea</taxon>
        <taxon>Methanobacteriati</taxon>
        <taxon>Methanobacteriota</taxon>
        <taxon>Stenosarchaea group</taxon>
        <taxon>Methanomicrobia</taxon>
        <taxon>Methanosarcinales</taxon>
        <taxon>Methanosarcinaceae</taxon>
        <taxon>Methanosarcina</taxon>
    </lineage>
</organism>
<name>PTAS_METTE</name>
<reference key="1">
    <citation type="journal article" date="1993" name="J. Bacteriol.">
        <title>Cloning, sequence analysis, and hyperexpression of the genes encoding phosphotransacetylase and acetate kinase from Methanosarcina thermophila.</title>
        <authorList>
            <person name="Latimer M.T."/>
            <person name="Ferry J.G."/>
        </authorList>
    </citation>
    <scope>NUCLEOTIDE SEQUENCE [GENOMIC DNA]</scope>
    <scope>PROTEIN SEQUENCE OF 2-21</scope>
    <source>
        <strain>ATCC 43570 / DSM 1825 / OCM 12 / TM-1</strain>
    </source>
</reference>
<reference key="2">
    <citation type="journal article" date="1997" name="J. Bacteriol.">
        <title>Identification of cysteine and arginine residues essential for the phosphotransacetylase from Methanosarcina thermophila.</title>
        <authorList>
            <person name="Rasche M.E."/>
            <person name="Smith K.S."/>
            <person name="Ferry J.G."/>
        </authorList>
    </citation>
    <scope>MUTAGENESIS</scope>
</reference>
<reference key="3">
    <citation type="journal article" date="2004" name="Structure">
        <title>Crystal structure of phosphotransacetylase from the methanogenic archaeon Methanosarcina thermophila.</title>
        <authorList>
            <person name="Iyer P.P."/>
            <person name="Lawrence S.H."/>
            <person name="Luther K.B."/>
            <person name="Rajashankar K.R."/>
            <person name="Yennawar H.P."/>
            <person name="Ferry J.G."/>
            <person name="Schindelin H."/>
        </authorList>
    </citation>
    <scope>X-RAY CRYSTALLOGRAPHY (2.7 ANGSTROMS)</scope>
    <scope>SUBUNIT</scope>
</reference>
<evidence type="ECO:0000269" key="1">
    <source>
    </source>
</evidence>
<evidence type="ECO:0000269" key="2">
    <source>
    </source>
</evidence>
<evidence type="ECO:0000269" key="3">
    <source>
    </source>
</evidence>
<evidence type="ECO:0000305" key="4"/>
<evidence type="ECO:0007829" key="5">
    <source>
        <dbReference type="PDB" id="1QZT"/>
    </source>
</evidence>
<evidence type="ECO:0007829" key="6">
    <source>
        <dbReference type="PDB" id="2AF3"/>
    </source>
</evidence>
<evidence type="ECO:0007829" key="7">
    <source>
        <dbReference type="PDB" id="2AF4"/>
    </source>
</evidence>
<keyword id="KW-0002">3D-structure</keyword>
<keyword id="KW-0012">Acyltransferase</keyword>
<keyword id="KW-1003">Cell membrane</keyword>
<keyword id="KW-0903">Direct protein sequencing</keyword>
<keyword id="KW-0472">Membrane</keyword>
<keyword id="KW-0808">Transferase</keyword>
<sequence>MVTFLEKISERAKKLNKTIALPETEDIRTLQAAAKILERGIADIVLVGNEADIKALAGDLDLSKAKIVDPKTYEKKDEYINAFYELRKHKGITLENAAEIMSDYVYFAVMMAKLGEVDGVVSGAAHSSSDTLRPAVQIVKTAKGAALASAFFIISVPDCEYGSDGTFLFADSGMVEMPSVEDVANIAVISAKTFELLVQDVPKVAMLSYSTKGSAKSKLTEATIASTKLAQELAPDIAIDGELQVDAAIVPKVAASKAPGSPVAGKANVFIFPDLNCGNIAYKIAQRLAKAEAYGPITQGLAKPINDLSRGCSDEDIVGAVAITCVQAAAQDK</sequence>
<proteinExistence type="evidence at protein level"/>
<gene>
    <name type="primary">pta</name>
</gene>
<dbReference type="EC" id="2.3.1.8"/>
<dbReference type="EMBL" id="L23147">
    <property type="protein sequence ID" value="AAA72041.1"/>
    <property type="molecule type" value="Unassigned_DNA"/>
</dbReference>
<dbReference type="PIR" id="A49338">
    <property type="entry name" value="A49338"/>
</dbReference>
<dbReference type="PDB" id="1QZT">
    <property type="method" value="X-ray"/>
    <property type="resolution" value="2.70 A"/>
    <property type="chains" value="A/B/C/D=1-333"/>
</dbReference>
<dbReference type="PDB" id="2AF3">
    <property type="method" value="X-ray"/>
    <property type="resolution" value="2.60 A"/>
    <property type="chains" value="C/D=1-333"/>
</dbReference>
<dbReference type="PDB" id="2AF4">
    <property type="method" value="X-ray"/>
    <property type="resolution" value="2.15 A"/>
    <property type="chains" value="C/D=1-333"/>
</dbReference>
<dbReference type="PDBsum" id="1QZT"/>
<dbReference type="PDBsum" id="2AF3"/>
<dbReference type="PDBsum" id="2AF4"/>
<dbReference type="SMR" id="P38503"/>
<dbReference type="BRENDA" id="2.3.1.8">
    <property type="organism ID" value="3281"/>
</dbReference>
<dbReference type="SABIO-RK" id="P38503"/>
<dbReference type="UniPathway" id="UPA00340">
    <property type="reaction ID" value="UER00459"/>
</dbReference>
<dbReference type="EvolutionaryTrace" id="P38503"/>
<dbReference type="GO" id="GO:0005886">
    <property type="term" value="C:plasma membrane"/>
    <property type="evidence" value="ECO:0007669"/>
    <property type="project" value="UniProtKB-SubCell"/>
</dbReference>
<dbReference type="GO" id="GO:0008959">
    <property type="term" value="F:phosphate acetyltransferase activity"/>
    <property type="evidence" value="ECO:0007669"/>
    <property type="project" value="UniProtKB-EC"/>
</dbReference>
<dbReference type="GO" id="GO:0006085">
    <property type="term" value="P:acetyl-CoA biosynthetic process"/>
    <property type="evidence" value="ECO:0007669"/>
    <property type="project" value="UniProtKB-UniPathway"/>
</dbReference>
<dbReference type="Gene3D" id="3.40.50.10950">
    <property type="match status" value="1"/>
</dbReference>
<dbReference type="Gene3D" id="3.40.50.10750">
    <property type="entry name" value="Isocitrate/Isopropylmalate dehydrogenase-like"/>
    <property type="match status" value="1"/>
</dbReference>
<dbReference type="InterPro" id="IPR012147">
    <property type="entry name" value="P_Ac_Bu_trans"/>
</dbReference>
<dbReference type="InterPro" id="IPR004614">
    <property type="entry name" value="P_AcTrfase"/>
</dbReference>
<dbReference type="InterPro" id="IPR042113">
    <property type="entry name" value="P_AcTrfase_dom1"/>
</dbReference>
<dbReference type="InterPro" id="IPR042112">
    <property type="entry name" value="P_AcTrfase_dom2"/>
</dbReference>
<dbReference type="InterPro" id="IPR050500">
    <property type="entry name" value="Phos_Acetyltrans/Butyryltrans"/>
</dbReference>
<dbReference type="InterPro" id="IPR002505">
    <property type="entry name" value="PTA_PTB"/>
</dbReference>
<dbReference type="NCBIfam" id="NF007233">
    <property type="entry name" value="PRK09653.1"/>
    <property type="match status" value="1"/>
</dbReference>
<dbReference type="NCBIfam" id="TIGR00651">
    <property type="entry name" value="pta"/>
    <property type="match status" value="1"/>
</dbReference>
<dbReference type="PANTHER" id="PTHR43356">
    <property type="entry name" value="PHOSPHATE ACETYLTRANSFERASE"/>
    <property type="match status" value="1"/>
</dbReference>
<dbReference type="PANTHER" id="PTHR43356:SF3">
    <property type="entry name" value="PHOSPHATE ACETYLTRANSFERASE"/>
    <property type="match status" value="1"/>
</dbReference>
<dbReference type="Pfam" id="PF01515">
    <property type="entry name" value="PTA_PTB"/>
    <property type="match status" value="1"/>
</dbReference>
<dbReference type="PIRSF" id="PIRSF000428">
    <property type="entry name" value="P_Ac_trans"/>
    <property type="match status" value="1"/>
</dbReference>
<dbReference type="SUPFAM" id="SSF53659">
    <property type="entry name" value="Isocitrate/Isopropylmalate dehydrogenase-like"/>
    <property type="match status" value="1"/>
</dbReference>